<evidence type="ECO:0000255" key="1">
    <source>
        <dbReference type="HAMAP-Rule" id="MF_00225"/>
    </source>
</evidence>
<reference key="1">
    <citation type="submission" date="2006-03" db="EMBL/GenBank/DDBJ databases">
        <title>Complete sequence of Methylobacillus flagellatus KT.</title>
        <authorList>
            <consortium name="US DOE Joint Genome Institute"/>
            <person name="Copeland A."/>
            <person name="Lucas S."/>
            <person name="Lapidus A."/>
            <person name="Barry K."/>
            <person name="Detter J.C."/>
            <person name="Glavina del Rio T."/>
            <person name="Hammon N."/>
            <person name="Israni S."/>
            <person name="Dalin E."/>
            <person name="Tice H."/>
            <person name="Pitluck S."/>
            <person name="Brettin T."/>
            <person name="Bruce D."/>
            <person name="Han C."/>
            <person name="Tapia R."/>
            <person name="Saunders E."/>
            <person name="Gilna P."/>
            <person name="Schmutz J."/>
            <person name="Larimer F."/>
            <person name="Land M."/>
            <person name="Kyrpides N."/>
            <person name="Anderson I."/>
            <person name="Richardson P."/>
        </authorList>
    </citation>
    <scope>NUCLEOTIDE SEQUENCE [LARGE SCALE GENOMIC DNA]</scope>
    <source>
        <strain>ATCC 51484 / DSM 6875 / VKM B-1610 / KT</strain>
    </source>
</reference>
<dbReference type="EC" id="1.3.5.2" evidence="1"/>
<dbReference type="EMBL" id="CP000284">
    <property type="protein sequence ID" value="ABE48776.1"/>
    <property type="molecule type" value="Genomic_DNA"/>
</dbReference>
<dbReference type="RefSeq" id="WP_011478873.1">
    <property type="nucleotide sequence ID" value="NC_007947.1"/>
</dbReference>
<dbReference type="SMR" id="Q1H411"/>
<dbReference type="STRING" id="265072.Mfla_0506"/>
<dbReference type="KEGG" id="mfa:Mfla_0506"/>
<dbReference type="eggNOG" id="COG0167">
    <property type="taxonomic scope" value="Bacteria"/>
</dbReference>
<dbReference type="HOGENOM" id="CLU_013640_2_0_4"/>
<dbReference type="OrthoDB" id="9802377at2"/>
<dbReference type="UniPathway" id="UPA00070">
    <property type="reaction ID" value="UER00946"/>
</dbReference>
<dbReference type="Proteomes" id="UP000002440">
    <property type="component" value="Chromosome"/>
</dbReference>
<dbReference type="GO" id="GO:0005737">
    <property type="term" value="C:cytoplasm"/>
    <property type="evidence" value="ECO:0007669"/>
    <property type="project" value="InterPro"/>
</dbReference>
<dbReference type="GO" id="GO:0005886">
    <property type="term" value="C:plasma membrane"/>
    <property type="evidence" value="ECO:0007669"/>
    <property type="project" value="UniProtKB-SubCell"/>
</dbReference>
<dbReference type="GO" id="GO:0106430">
    <property type="term" value="F:dihydroorotate dehydrogenase (quinone) activity"/>
    <property type="evidence" value="ECO:0007669"/>
    <property type="project" value="UniProtKB-EC"/>
</dbReference>
<dbReference type="GO" id="GO:0006207">
    <property type="term" value="P:'de novo' pyrimidine nucleobase biosynthetic process"/>
    <property type="evidence" value="ECO:0007669"/>
    <property type="project" value="InterPro"/>
</dbReference>
<dbReference type="GO" id="GO:0044205">
    <property type="term" value="P:'de novo' UMP biosynthetic process"/>
    <property type="evidence" value="ECO:0007669"/>
    <property type="project" value="UniProtKB-UniRule"/>
</dbReference>
<dbReference type="CDD" id="cd04738">
    <property type="entry name" value="DHOD_2_like"/>
    <property type="match status" value="1"/>
</dbReference>
<dbReference type="FunFam" id="3.20.20.70:FF:000028">
    <property type="entry name" value="Dihydroorotate dehydrogenase (quinone)"/>
    <property type="match status" value="1"/>
</dbReference>
<dbReference type="Gene3D" id="3.20.20.70">
    <property type="entry name" value="Aldolase class I"/>
    <property type="match status" value="1"/>
</dbReference>
<dbReference type="HAMAP" id="MF_00225">
    <property type="entry name" value="DHO_dh_type2"/>
    <property type="match status" value="1"/>
</dbReference>
<dbReference type="InterPro" id="IPR013785">
    <property type="entry name" value="Aldolase_TIM"/>
</dbReference>
<dbReference type="InterPro" id="IPR050074">
    <property type="entry name" value="DHO_dehydrogenase"/>
</dbReference>
<dbReference type="InterPro" id="IPR012135">
    <property type="entry name" value="Dihydroorotate_DH_1_2"/>
</dbReference>
<dbReference type="InterPro" id="IPR005719">
    <property type="entry name" value="Dihydroorotate_DH_2"/>
</dbReference>
<dbReference type="InterPro" id="IPR005720">
    <property type="entry name" value="Dihydroorotate_DH_cat"/>
</dbReference>
<dbReference type="InterPro" id="IPR001295">
    <property type="entry name" value="Dihydroorotate_DH_CS"/>
</dbReference>
<dbReference type="NCBIfam" id="NF003644">
    <property type="entry name" value="PRK05286.1-1"/>
    <property type="match status" value="1"/>
</dbReference>
<dbReference type="NCBIfam" id="NF003645">
    <property type="entry name" value="PRK05286.1-2"/>
    <property type="match status" value="1"/>
</dbReference>
<dbReference type="NCBIfam" id="NF003646">
    <property type="entry name" value="PRK05286.1-4"/>
    <property type="match status" value="1"/>
</dbReference>
<dbReference type="NCBIfam" id="NF003652">
    <property type="entry name" value="PRK05286.2-5"/>
    <property type="match status" value="1"/>
</dbReference>
<dbReference type="NCBIfam" id="TIGR01036">
    <property type="entry name" value="pyrD_sub2"/>
    <property type="match status" value="1"/>
</dbReference>
<dbReference type="PANTHER" id="PTHR48109:SF4">
    <property type="entry name" value="DIHYDROOROTATE DEHYDROGENASE (QUINONE), MITOCHONDRIAL"/>
    <property type="match status" value="1"/>
</dbReference>
<dbReference type="PANTHER" id="PTHR48109">
    <property type="entry name" value="DIHYDROOROTATE DEHYDROGENASE (QUINONE), MITOCHONDRIAL-RELATED"/>
    <property type="match status" value="1"/>
</dbReference>
<dbReference type="Pfam" id="PF01180">
    <property type="entry name" value="DHO_dh"/>
    <property type="match status" value="1"/>
</dbReference>
<dbReference type="PIRSF" id="PIRSF000164">
    <property type="entry name" value="DHO_oxidase"/>
    <property type="match status" value="1"/>
</dbReference>
<dbReference type="SUPFAM" id="SSF51395">
    <property type="entry name" value="FMN-linked oxidoreductases"/>
    <property type="match status" value="1"/>
</dbReference>
<dbReference type="PROSITE" id="PS00911">
    <property type="entry name" value="DHODEHASE_1"/>
    <property type="match status" value="1"/>
</dbReference>
<dbReference type="PROSITE" id="PS00912">
    <property type="entry name" value="DHODEHASE_2"/>
    <property type="match status" value="1"/>
</dbReference>
<proteinExistence type="inferred from homology"/>
<sequence length="337" mass="36673">MLYSIVKPWLFRLDAERAHDFTLKNLKRLERSGLLNLYPRPPKCKQRQVMGINFPNPVGLAAGLDKNGAYIDALAGLGFGFIEIGTITPRPQPGNPKPRMFRLPEAQGVINRFGFNNLGVDVLLRNVAATKYKGVLGINIGKNFDTPNERAVDDYLHCLRKVYPYAHYVTVNISSPNTKNLRALQEKEALGQLLHALKQEQQVLADQHGRYVPIALKIAPDLDEGQVADIAALLMKHQFDGVIATNTTLARDMVQALPCAQEAGGLSGAPLRDRSTAVIQSLSNHLAGALPIIGVGGILSGEDAEQKIKAGASLVQVYSGLVYRGPVLVDDICRTLG</sequence>
<name>PYRD_METFK</name>
<accession>Q1H411</accession>
<organism>
    <name type="scientific">Methylobacillus flagellatus (strain ATCC 51484 / DSM 6875 / VKM B-1610 / KT)</name>
    <dbReference type="NCBI Taxonomy" id="265072"/>
    <lineage>
        <taxon>Bacteria</taxon>
        <taxon>Pseudomonadati</taxon>
        <taxon>Pseudomonadota</taxon>
        <taxon>Betaproteobacteria</taxon>
        <taxon>Nitrosomonadales</taxon>
        <taxon>Methylophilaceae</taxon>
        <taxon>Methylobacillus</taxon>
    </lineage>
</organism>
<keyword id="KW-1003">Cell membrane</keyword>
<keyword id="KW-0285">Flavoprotein</keyword>
<keyword id="KW-0288">FMN</keyword>
<keyword id="KW-0472">Membrane</keyword>
<keyword id="KW-0560">Oxidoreductase</keyword>
<keyword id="KW-0665">Pyrimidine biosynthesis</keyword>
<keyword id="KW-1185">Reference proteome</keyword>
<gene>
    <name evidence="1" type="primary">pyrD</name>
    <name type="ordered locus">Mfla_0506</name>
</gene>
<protein>
    <recommendedName>
        <fullName evidence="1">Dihydroorotate dehydrogenase (quinone)</fullName>
        <ecNumber evidence="1">1.3.5.2</ecNumber>
    </recommendedName>
    <alternativeName>
        <fullName evidence="1">DHOdehase</fullName>
        <shortName evidence="1">DHOD</shortName>
        <shortName evidence="1">DHODase</shortName>
    </alternativeName>
    <alternativeName>
        <fullName evidence="1">Dihydroorotate oxidase</fullName>
    </alternativeName>
</protein>
<feature type="chain" id="PRO_1000024183" description="Dihydroorotate dehydrogenase (quinone)">
    <location>
        <begin position="1"/>
        <end position="337"/>
    </location>
</feature>
<feature type="active site" description="Nucleophile" evidence="1">
    <location>
        <position position="175"/>
    </location>
</feature>
<feature type="binding site" evidence="1">
    <location>
        <begin position="62"/>
        <end position="66"/>
    </location>
    <ligand>
        <name>FMN</name>
        <dbReference type="ChEBI" id="CHEBI:58210"/>
    </ligand>
</feature>
<feature type="binding site" evidence="1">
    <location>
        <position position="66"/>
    </location>
    <ligand>
        <name>substrate</name>
    </ligand>
</feature>
<feature type="binding site" evidence="1">
    <location>
        <position position="86"/>
    </location>
    <ligand>
        <name>FMN</name>
        <dbReference type="ChEBI" id="CHEBI:58210"/>
    </ligand>
</feature>
<feature type="binding site" evidence="1">
    <location>
        <begin position="111"/>
        <end position="115"/>
    </location>
    <ligand>
        <name>substrate</name>
    </ligand>
</feature>
<feature type="binding site" evidence="1">
    <location>
        <position position="139"/>
    </location>
    <ligand>
        <name>FMN</name>
        <dbReference type="ChEBI" id="CHEBI:58210"/>
    </ligand>
</feature>
<feature type="binding site" evidence="1">
    <location>
        <position position="172"/>
    </location>
    <ligand>
        <name>FMN</name>
        <dbReference type="ChEBI" id="CHEBI:58210"/>
    </ligand>
</feature>
<feature type="binding site" evidence="1">
    <location>
        <position position="172"/>
    </location>
    <ligand>
        <name>substrate</name>
    </ligand>
</feature>
<feature type="binding site" evidence="1">
    <location>
        <position position="177"/>
    </location>
    <ligand>
        <name>substrate</name>
    </ligand>
</feature>
<feature type="binding site" evidence="1">
    <location>
        <position position="217"/>
    </location>
    <ligand>
        <name>FMN</name>
        <dbReference type="ChEBI" id="CHEBI:58210"/>
    </ligand>
</feature>
<feature type="binding site" evidence="1">
    <location>
        <position position="245"/>
    </location>
    <ligand>
        <name>FMN</name>
        <dbReference type="ChEBI" id="CHEBI:58210"/>
    </ligand>
</feature>
<feature type="binding site" evidence="1">
    <location>
        <begin position="246"/>
        <end position="247"/>
    </location>
    <ligand>
        <name>substrate</name>
    </ligand>
</feature>
<feature type="binding site" evidence="1">
    <location>
        <position position="268"/>
    </location>
    <ligand>
        <name>FMN</name>
        <dbReference type="ChEBI" id="CHEBI:58210"/>
    </ligand>
</feature>
<feature type="binding site" evidence="1">
    <location>
        <position position="297"/>
    </location>
    <ligand>
        <name>FMN</name>
        <dbReference type="ChEBI" id="CHEBI:58210"/>
    </ligand>
</feature>
<feature type="binding site" evidence="1">
    <location>
        <begin position="318"/>
        <end position="319"/>
    </location>
    <ligand>
        <name>FMN</name>
        <dbReference type="ChEBI" id="CHEBI:58210"/>
    </ligand>
</feature>
<comment type="function">
    <text evidence="1">Catalyzes the conversion of dihydroorotate to orotate with quinone as electron acceptor.</text>
</comment>
<comment type="catalytic activity">
    <reaction evidence="1">
        <text>(S)-dihydroorotate + a quinone = orotate + a quinol</text>
        <dbReference type="Rhea" id="RHEA:30187"/>
        <dbReference type="ChEBI" id="CHEBI:24646"/>
        <dbReference type="ChEBI" id="CHEBI:30839"/>
        <dbReference type="ChEBI" id="CHEBI:30864"/>
        <dbReference type="ChEBI" id="CHEBI:132124"/>
        <dbReference type="EC" id="1.3.5.2"/>
    </reaction>
</comment>
<comment type="cofactor">
    <cofactor evidence="1">
        <name>FMN</name>
        <dbReference type="ChEBI" id="CHEBI:58210"/>
    </cofactor>
    <text evidence="1">Binds 1 FMN per subunit.</text>
</comment>
<comment type="pathway">
    <text evidence="1">Pyrimidine metabolism; UMP biosynthesis via de novo pathway; orotate from (S)-dihydroorotate (quinone route): step 1/1.</text>
</comment>
<comment type="subunit">
    <text evidence="1">Monomer.</text>
</comment>
<comment type="subcellular location">
    <subcellularLocation>
        <location evidence="1">Cell membrane</location>
        <topology evidence="1">Peripheral membrane protein</topology>
    </subcellularLocation>
</comment>
<comment type="similarity">
    <text evidence="1">Belongs to the dihydroorotate dehydrogenase family. Type 2 subfamily.</text>
</comment>